<dbReference type="EC" id="3.2.2.23" evidence="2"/>
<dbReference type="EC" id="4.2.99.18" evidence="2"/>
<dbReference type="EMBL" id="CP001389">
    <property type="protein sequence ID" value="ACP27435.1"/>
    <property type="molecule type" value="Genomic_DNA"/>
</dbReference>
<dbReference type="RefSeq" id="WP_012710177.1">
    <property type="nucleotide sequence ID" value="NC_012587.1"/>
</dbReference>
<dbReference type="RefSeq" id="YP_002828188.1">
    <property type="nucleotide sequence ID" value="NC_012587.1"/>
</dbReference>
<dbReference type="SMR" id="C3MCY7"/>
<dbReference type="STRING" id="394.NGR_c37140"/>
<dbReference type="KEGG" id="rhi:NGR_c37140"/>
<dbReference type="PATRIC" id="fig|394.7.peg.6569"/>
<dbReference type="eggNOG" id="COG0266">
    <property type="taxonomic scope" value="Bacteria"/>
</dbReference>
<dbReference type="HOGENOM" id="CLU_038423_1_1_5"/>
<dbReference type="OrthoDB" id="9800855at2"/>
<dbReference type="Proteomes" id="UP000001054">
    <property type="component" value="Chromosome"/>
</dbReference>
<dbReference type="GO" id="GO:0034039">
    <property type="term" value="F:8-oxo-7,8-dihydroguanine DNA N-glycosylase activity"/>
    <property type="evidence" value="ECO:0007669"/>
    <property type="project" value="TreeGrafter"/>
</dbReference>
<dbReference type="GO" id="GO:0140078">
    <property type="term" value="F:class I DNA-(apurinic or apyrimidinic site) endonuclease activity"/>
    <property type="evidence" value="ECO:0007669"/>
    <property type="project" value="UniProtKB-EC"/>
</dbReference>
<dbReference type="GO" id="GO:0003684">
    <property type="term" value="F:damaged DNA binding"/>
    <property type="evidence" value="ECO:0007669"/>
    <property type="project" value="InterPro"/>
</dbReference>
<dbReference type="GO" id="GO:0008270">
    <property type="term" value="F:zinc ion binding"/>
    <property type="evidence" value="ECO:0007669"/>
    <property type="project" value="UniProtKB-UniRule"/>
</dbReference>
<dbReference type="GO" id="GO:0006284">
    <property type="term" value="P:base-excision repair"/>
    <property type="evidence" value="ECO:0007669"/>
    <property type="project" value="InterPro"/>
</dbReference>
<dbReference type="CDD" id="cd08966">
    <property type="entry name" value="EcFpg-like_N"/>
    <property type="match status" value="1"/>
</dbReference>
<dbReference type="FunFam" id="1.10.8.50:FF:000003">
    <property type="entry name" value="Formamidopyrimidine-DNA glycosylase"/>
    <property type="match status" value="1"/>
</dbReference>
<dbReference type="Gene3D" id="1.10.8.50">
    <property type="match status" value="1"/>
</dbReference>
<dbReference type="Gene3D" id="3.20.190.10">
    <property type="entry name" value="MutM-like, N-terminal"/>
    <property type="match status" value="1"/>
</dbReference>
<dbReference type="HAMAP" id="MF_00103">
    <property type="entry name" value="Fapy_DNA_glycosyl"/>
    <property type="match status" value="1"/>
</dbReference>
<dbReference type="InterPro" id="IPR015886">
    <property type="entry name" value="DNA_glyclase/AP_lyase_DNA-bd"/>
</dbReference>
<dbReference type="InterPro" id="IPR020629">
    <property type="entry name" value="Formamido-pyr_DNA_Glyclase"/>
</dbReference>
<dbReference type="InterPro" id="IPR012319">
    <property type="entry name" value="FPG_cat"/>
</dbReference>
<dbReference type="InterPro" id="IPR035937">
    <property type="entry name" value="MutM-like_N-ter"/>
</dbReference>
<dbReference type="InterPro" id="IPR010979">
    <property type="entry name" value="Ribosomal_uS13-like_H2TH"/>
</dbReference>
<dbReference type="InterPro" id="IPR000214">
    <property type="entry name" value="Znf_DNA_glyclase/AP_lyase"/>
</dbReference>
<dbReference type="InterPro" id="IPR010663">
    <property type="entry name" value="Znf_FPG/IleRS"/>
</dbReference>
<dbReference type="NCBIfam" id="TIGR00577">
    <property type="entry name" value="fpg"/>
    <property type="match status" value="1"/>
</dbReference>
<dbReference type="NCBIfam" id="NF002211">
    <property type="entry name" value="PRK01103.1"/>
    <property type="match status" value="1"/>
</dbReference>
<dbReference type="PANTHER" id="PTHR22993">
    <property type="entry name" value="FORMAMIDOPYRIMIDINE-DNA GLYCOSYLASE"/>
    <property type="match status" value="1"/>
</dbReference>
<dbReference type="PANTHER" id="PTHR22993:SF9">
    <property type="entry name" value="FORMAMIDOPYRIMIDINE-DNA GLYCOSYLASE"/>
    <property type="match status" value="1"/>
</dbReference>
<dbReference type="Pfam" id="PF01149">
    <property type="entry name" value="Fapy_DNA_glyco"/>
    <property type="match status" value="1"/>
</dbReference>
<dbReference type="Pfam" id="PF06831">
    <property type="entry name" value="H2TH"/>
    <property type="match status" value="1"/>
</dbReference>
<dbReference type="Pfam" id="PF06827">
    <property type="entry name" value="zf-FPG_IleRS"/>
    <property type="match status" value="1"/>
</dbReference>
<dbReference type="SMART" id="SM00898">
    <property type="entry name" value="Fapy_DNA_glyco"/>
    <property type="match status" value="1"/>
</dbReference>
<dbReference type="SMART" id="SM01232">
    <property type="entry name" value="H2TH"/>
    <property type="match status" value="1"/>
</dbReference>
<dbReference type="SUPFAM" id="SSF57716">
    <property type="entry name" value="Glucocorticoid receptor-like (DNA-binding domain)"/>
    <property type="match status" value="1"/>
</dbReference>
<dbReference type="SUPFAM" id="SSF81624">
    <property type="entry name" value="N-terminal domain of MutM-like DNA repair proteins"/>
    <property type="match status" value="1"/>
</dbReference>
<dbReference type="SUPFAM" id="SSF46946">
    <property type="entry name" value="S13-like H2TH domain"/>
    <property type="match status" value="1"/>
</dbReference>
<dbReference type="PROSITE" id="PS51068">
    <property type="entry name" value="FPG_CAT"/>
    <property type="match status" value="1"/>
</dbReference>
<dbReference type="PROSITE" id="PS51066">
    <property type="entry name" value="ZF_FPG_2"/>
    <property type="match status" value="1"/>
</dbReference>
<protein>
    <recommendedName>
        <fullName evidence="2">Formamidopyrimidine-DNA glycosylase</fullName>
        <shortName evidence="2">Fapy-DNA glycosylase</shortName>
        <ecNumber evidence="2">3.2.2.23</ecNumber>
    </recommendedName>
    <alternativeName>
        <fullName evidence="2">DNA-(apurinic or apyrimidinic site) lyase MutM</fullName>
        <shortName evidence="2">AP lyase MutM</shortName>
        <ecNumber evidence="2">4.2.99.18</ecNumber>
    </alternativeName>
</protein>
<proteinExistence type="inferred from homology"/>
<feature type="initiator methionine" description="Removed" evidence="1">
    <location>
        <position position="1"/>
    </location>
</feature>
<feature type="chain" id="PRO_1000118898" description="Formamidopyrimidine-DNA glycosylase">
    <location>
        <begin position="2"/>
        <end position="296"/>
    </location>
</feature>
<feature type="zinc finger region" description="FPG-type" evidence="2">
    <location>
        <begin position="260"/>
        <end position="296"/>
    </location>
</feature>
<feature type="active site" description="Schiff-base intermediate with DNA" evidence="2">
    <location>
        <position position="2"/>
    </location>
</feature>
<feature type="active site" description="Proton donor" evidence="2">
    <location>
        <position position="3"/>
    </location>
</feature>
<feature type="active site" description="Proton donor; for beta-elimination activity" evidence="2">
    <location>
        <position position="58"/>
    </location>
</feature>
<feature type="active site" description="Proton donor; for delta-elimination activity" evidence="2">
    <location>
        <position position="286"/>
    </location>
</feature>
<feature type="binding site" evidence="2">
    <location>
        <position position="104"/>
    </location>
    <ligand>
        <name>DNA</name>
        <dbReference type="ChEBI" id="CHEBI:16991"/>
    </ligand>
</feature>
<feature type="binding site" evidence="2">
    <location>
        <position position="126"/>
    </location>
    <ligand>
        <name>DNA</name>
        <dbReference type="ChEBI" id="CHEBI:16991"/>
    </ligand>
</feature>
<feature type="binding site" evidence="2">
    <location>
        <position position="169"/>
    </location>
    <ligand>
        <name>DNA</name>
        <dbReference type="ChEBI" id="CHEBI:16991"/>
    </ligand>
</feature>
<gene>
    <name evidence="2" type="primary">mutM</name>
    <name evidence="2" type="synonym">fpg</name>
    <name type="ordered locus">NGR_c37140</name>
</gene>
<reference key="1">
    <citation type="journal article" date="2009" name="Appl. Environ. Microbiol.">
        <title>Rhizobium sp. strain NGR234 possesses a remarkable number of secretion systems.</title>
        <authorList>
            <person name="Schmeisser C."/>
            <person name="Liesegang H."/>
            <person name="Krysciak D."/>
            <person name="Bakkou N."/>
            <person name="Le Quere A."/>
            <person name="Wollherr A."/>
            <person name="Heinemeyer I."/>
            <person name="Morgenstern B."/>
            <person name="Pommerening-Roeser A."/>
            <person name="Flores M."/>
            <person name="Palacios R."/>
            <person name="Brenner S."/>
            <person name="Gottschalk G."/>
            <person name="Schmitz R.A."/>
            <person name="Broughton W.J."/>
            <person name="Perret X."/>
            <person name="Strittmatter A.W."/>
            <person name="Streit W.R."/>
        </authorList>
    </citation>
    <scope>NUCLEOTIDE SEQUENCE [LARGE SCALE GENOMIC DNA]</scope>
    <source>
        <strain>NBRC 101917 / NGR234</strain>
    </source>
</reference>
<keyword id="KW-0227">DNA damage</keyword>
<keyword id="KW-0234">DNA repair</keyword>
<keyword id="KW-0238">DNA-binding</keyword>
<keyword id="KW-0326">Glycosidase</keyword>
<keyword id="KW-0378">Hydrolase</keyword>
<keyword id="KW-0456">Lyase</keyword>
<keyword id="KW-0479">Metal-binding</keyword>
<keyword id="KW-0511">Multifunctional enzyme</keyword>
<keyword id="KW-1185">Reference proteome</keyword>
<keyword id="KW-0862">Zinc</keyword>
<keyword id="KW-0863">Zinc-finger</keyword>
<evidence type="ECO:0000250" key="1"/>
<evidence type="ECO:0000255" key="2">
    <source>
        <dbReference type="HAMAP-Rule" id="MF_00103"/>
    </source>
</evidence>
<comment type="function">
    <text evidence="2">Involved in base excision repair of DNA damaged by oxidation or by mutagenic agents. Acts as a DNA glycosylase that recognizes and removes damaged bases. Has a preference for oxidized purines, such as 7,8-dihydro-8-oxoguanine (8-oxoG). Has AP (apurinic/apyrimidinic) lyase activity and introduces nicks in the DNA strand. Cleaves the DNA backbone by beta-delta elimination to generate a single-strand break at the site of the removed base with both 3'- and 5'-phosphates.</text>
</comment>
<comment type="catalytic activity">
    <reaction evidence="2">
        <text>Hydrolysis of DNA containing ring-opened 7-methylguanine residues, releasing 2,6-diamino-4-hydroxy-5-(N-methyl)formamidopyrimidine.</text>
        <dbReference type="EC" id="3.2.2.23"/>
    </reaction>
</comment>
<comment type="catalytic activity">
    <reaction evidence="2">
        <text>2'-deoxyribonucleotide-(2'-deoxyribose 5'-phosphate)-2'-deoxyribonucleotide-DNA = a 3'-end 2'-deoxyribonucleotide-(2,3-dehydro-2,3-deoxyribose 5'-phosphate)-DNA + a 5'-end 5'-phospho-2'-deoxyribonucleoside-DNA + H(+)</text>
        <dbReference type="Rhea" id="RHEA:66592"/>
        <dbReference type="Rhea" id="RHEA-COMP:13180"/>
        <dbReference type="Rhea" id="RHEA-COMP:16897"/>
        <dbReference type="Rhea" id="RHEA-COMP:17067"/>
        <dbReference type="ChEBI" id="CHEBI:15378"/>
        <dbReference type="ChEBI" id="CHEBI:136412"/>
        <dbReference type="ChEBI" id="CHEBI:157695"/>
        <dbReference type="ChEBI" id="CHEBI:167181"/>
        <dbReference type="EC" id="4.2.99.18"/>
    </reaction>
</comment>
<comment type="cofactor">
    <cofactor evidence="2">
        <name>Zn(2+)</name>
        <dbReference type="ChEBI" id="CHEBI:29105"/>
    </cofactor>
    <text evidence="2">Binds 1 zinc ion per subunit.</text>
</comment>
<comment type="subunit">
    <text evidence="2">Monomer.</text>
</comment>
<comment type="similarity">
    <text evidence="2">Belongs to the FPG family.</text>
</comment>
<organism>
    <name type="scientific">Sinorhizobium fredii (strain NBRC 101917 / NGR234)</name>
    <dbReference type="NCBI Taxonomy" id="394"/>
    <lineage>
        <taxon>Bacteria</taxon>
        <taxon>Pseudomonadati</taxon>
        <taxon>Pseudomonadota</taxon>
        <taxon>Alphaproteobacteria</taxon>
        <taxon>Hyphomicrobiales</taxon>
        <taxon>Rhizobiaceae</taxon>
        <taxon>Sinorhizobium/Ensifer group</taxon>
        <taxon>Sinorhizobium</taxon>
    </lineage>
</organism>
<sequence>MPELPEVETVKRGLAPAIEGALLVRAELRRPDLRFPFPENFAAAVSGRRILALSRRAKYLMIDLEGGDVIVAHLGMSGSFRIEAGAQPAAPGEFHHPRGKDEKHDHVIFHLDGGSGQMRVIYNDPRRFGFMDLARRDTIAEHAYFRDLGEEPTGNALDAAYLAARLAGKSQPLKTALLDQRTIAGLGNIYVCEALWRSGLSPNRAAGTLVDKRGRPKQALLALVEAIRAVIADAIAAGGSSLKDHIQADGSLGYFQHAFSVYDRAGEACRKPGCDGTVTRIVQAGRSTFHCPRCQK</sequence>
<name>FPG_SINFN</name>
<accession>C3MCY7</accession>